<evidence type="ECO:0000255" key="1">
    <source>
        <dbReference type="HAMAP-Rule" id="MF_00377"/>
    </source>
</evidence>
<evidence type="ECO:0000256" key="2">
    <source>
        <dbReference type="SAM" id="MobiDB-lite"/>
    </source>
</evidence>
<proteinExistence type="inferred from homology"/>
<reference key="1">
    <citation type="journal article" date="2006" name="J. Bacteriol.">
        <title>Complete genome sequence of Yersinia pestis strains Antiqua and Nepal516: evidence of gene reduction in an emerging pathogen.</title>
        <authorList>
            <person name="Chain P.S.G."/>
            <person name="Hu P."/>
            <person name="Malfatti S.A."/>
            <person name="Radnedge L."/>
            <person name="Larimer F."/>
            <person name="Vergez L.M."/>
            <person name="Worsham P."/>
            <person name="Chu M.C."/>
            <person name="Andersen G.L."/>
        </authorList>
    </citation>
    <scope>NUCLEOTIDE SEQUENCE [LARGE SCALE GENOMIC DNA]</scope>
    <source>
        <strain>Antiqua</strain>
    </source>
</reference>
<feature type="chain" id="PRO_1000048761" description="Chromosomal replication initiator protein DnaA">
    <location>
        <begin position="1"/>
        <end position="462"/>
    </location>
</feature>
<feature type="region of interest" description="Domain I, interacts with DnaA modulators" evidence="1">
    <location>
        <begin position="1"/>
        <end position="83"/>
    </location>
</feature>
<feature type="region of interest" description="Domain II" evidence="1">
    <location>
        <begin position="83"/>
        <end position="125"/>
    </location>
</feature>
<feature type="region of interest" description="Disordered" evidence="2">
    <location>
        <begin position="104"/>
        <end position="125"/>
    </location>
</feature>
<feature type="region of interest" description="Domain III, AAA+ region" evidence="1">
    <location>
        <begin position="126"/>
        <end position="342"/>
    </location>
</feature>
<feature type="region of interest" description="Domain IV, binds dsDNA" evidence="1">
    <location>
        <begin position="343"/>
        <end position="462"/>
    </location>
</feature>
<feature type="compositionally biased region" description="Polar residues" evidence="2">
    <location>
        <begin position="112"/>
        <end position="125"/>
    </location>
</feature>
<feature type="binding site" evidence="1">
    <location>
        <position position="170"/>
    </location>
    <ligand>
        <name>ATP</name>
        <dbReference type="ChEBI" id="CHEBI:30616"/>
    </ligand>
</feature>
<feature type="binding site" evidence="1">
    <location>
        <position position="172"/>
    </location>
    <ligand>
        <name>ATP</name>
        <dbReference type="ChEBI" id="CHEBI:30616"/>
    </ligand>
</feature>
<feature type="binding site" evidence="1">
    <location>
        <position position="173"/>
    </location>
    <ligand>
        <name>ATP</name>
        <dbReference type="ChEBI" id="CHEBI:30616"/>
    </ligand>
</feature>
<feature type="binding site" evidence="1">
    <location>
        <position position="174"/>
    </location>
    <ligand>
        <name>ATP</name>
        <dbReference type="ChEBI" id="CHEBI:30616"/>
    </ligand>
</feature>
<name>DNAA_YERPA</name>
<sequence>MSLSLWQQCLARLQDELPATEFSMWIRPLQAELSDNTLALYAPNRFVLDWVRDKYLNNINGLLNDFCGTEVPLLRFEVGSKPAARAHNNPVTASVSAPVAPVTRSAPMRPSWDNSPAQPELSYRSNVNPKHTFDNFVEGKSNQLARAAARQVADNPGGAYNPLFLYGGTGLGKTHLLHAVGNGIMARKANAKVVYMHSERFVQDMVKALQNNAIEEFKRYYRSVDALLIDDIQFFANKERSQEEFFHTFNALLEGNQQIILTSDRYPKEINGVEDRLKSRFGWGLTVAIEPPELETRVAILMKKADENDIRLPGEVAFFIAKRLRSNVRELEGALNRVIANANFTGRAITIDFVREALRDLLALQEKLVTIDNIQKTVAEYYKIKVADLLSKRRSRSVARPRQMAMALAKELTNHSLPEIGDAFGGRDHTTVLHACRKIEQLREESHDIKEDFSNLIRTLSS</sequence>
<gene>
    <name evidence="1" type="primary">dnaA</name>
    <name type="ordered locus">YPA_4143</name>
</gene>
<accession>Q1C0B8</accession>
<keyword id="KW-0067">ATP-binding</keyword>
<keyword id="KW-0963">Cytoplasm</keyword>
<keyword id="KW-0235">DNA replication</keyword>
<keyword id="KW-0238">DNA-binding</keyword>
<keyword id="KW-0446">Lipid-binding</keyword>
<keyword id="KW-0547">Nucleotide-binding</keyword>
<dbReference type="EMBL" id="CP000308">
    <property type="protein sequence ID" value="ABG16104.1"/>
    <property type="molecule type" value="Genomic_DNA"/>
</dbReference>
<dbReference type="RefSeq" id="WP_002220732.1">
    <property type="nucleotide sequence ID" value="NZ_CP009906.1"/>
</dbReference>
<dbReference type="SMR" id="Q1C0B8"/>
<dbReference type="GeneID" id="57974625"/>
<dbReference type="KEGG" id="ypa:YPA_4143"/>
<dbReference type="Proteomes" id="UP000001971">
    <property type="component" value="Chromosome"/>
</dbReference>
<dbReference type="GO" id="GO:0005737">
    <property type="term" value="C:cytoplasm"/>
    <property type="evidence" value="ECO:0007669"/>
    <property type="project" value="UniProtKB-SubCell"/>
</dbReference>
<dbReference type="GO" id="GO:0005886">
    <property type="term" value="C:plasma membrane"/>
    <property type="evidence" value="ECO:0007669"/>
    <property type="project" value="TreeGrafter"/>
</dbReference>
<dbReference type="GO" id="GO:0005524">
    <property type="term" value="F:ATP binding"/>
    <property type="evidence" value="ECO:0007669"/>
    <property type="project" value="UniProtKB-UniRule"/>
</dbReference>
<dbReference type="GO" id="GO:0016887">
    <property type="term" value="F:ATP hydrolysis activity"/>
    <property type="evidence" value="ECO:0007669"/>
    <property type="project" value="InterPro"/>
</dbReference>
<dbReference type="GO" id="GO:0003688">
    <property type="term" value="F:DNA replication origin binding"/>
    <property type="evidence" value="ECO:0007669"/>
    <property type="project" value="UniProtKB-UniRule"/>
</dbReference>
<dbReference type="GO" id="GO:0008289">
    <property type="term" value="F:lipid binding"/>
    <property type="evidence" value="ECO:0007669"/>
    <property type="project" value="UniProtKB-KW"/>
</dbReference>
<dbReference type="GO" id="GO:0006270">
    <property type="term" value="P:DNA replication initiation"/>
    <property type="evidence" value="ECO:0007669"/>
    <property type="project" value="UniProtKB-UniRule"/>
</dbReference>
<dbReference type="GO" id="GO:0006275">
    <property type="term" value="P:regulation of DNA replication"/>
    <property type="evidence" value="ECO:0007669"/>
    <property type="project" value="UniProtKB-UniRule"/>
</dbReference>
<dbReference type="CDD" id="cd00009">
    <property type="entry name" value="AAA"/>
    <property type="match status" value="1"/>
</dbReference>
<dbReference type="CDD" id="cd06571">
    <property type="entry name" value="Bac_DnaA_C"/>
    <property type="match status" value="1"/>
</dbReference>
<dbReference type="FunFam" id="1.10.1750.10:FF:000001">
    <property type="entry name" value="Chromosomal replication initiator protein DnaA"/>
    <property type="match status" value="1"/>
</dbReference>
<dbReference type="FunFam" id="1.10.8.60:FF:000003">
    <property type="entry name" value="Chromosomal replication initiator protein DnaA"/>
    <property type="match status" value="1"/>
</dbReference>
<dbReference type="FunFam" id="3.30.300.180:FF:000001">
    <property type="entry name" value="Chromosomal replication initiator protein DnaA"/>
    <property type="match status" value="1"/>
</dbReference>
<dbReference type="FunFam" id="3.40.50.300:FF:000103">
    <property type="entry name" value="Chromosomal replication initiator protein DnaA"/>
    <property type="match status" value="1"/>
</dbReference>
<dbReference type="Gene3D" id="1.10.1750.10">
    <property type="match status" value="1"/>
</dbReference>
<dbReference type="Gene3D" id="1.10.8.60">
    <property type="match status" value="1"/>
</dbReference>
<dbReference type="Gene3D" id="3.30.300.180">
    <property type="match status" value="1"/>
</dbReference>
<dbReference type="Gene3D" id="3.40.50.300">
    <property type="entry name" value="P-loop containing nucleotide triphosphate hydrolases"/>
    <property type="match status" value="1"/>
</dbReference>
<dbReference type="HAMAP" id="MF_00377">
    <property type="entry name" value="DnaA_bact"/>
    <property type="match status" value="1"/>
</dbReference>
<dbReference type="InterPro" id="IPR003593">
    <property type="entry name" value="AAA+_ATPase"/>
</dbReference>
<dbReference type="InterPro" id="IPR001957">
    <property type="entry name" value="Chromosome_initiator_DnaA"/>
</dbReference>
<dbReference type="InterPro" id="IPR020591">
    <property type="entry name" value="Chromosome_initiator_DnaA-like"/>
</dbReference>
<dbReference type="InterPro" id="IPR018312">
    <property type="entry name" value="Chromosome_initiator_DnaA_CS"/>
</dbReference>
<dbReference type="InterPro" id="IPR013159">
    <property type="entry name" value="DnaA_C"/>
</dbReference>
<dbReference type="InterPro" id="IPR013317">
    <property type="entry name" value="DnaA_dom"/>
</dbReference>
<dbReference type="InterPro" id="IPR024633">
    <property type="entry name" value="DnaA_N_dom"/>
</dbReference>
<dbReference type="InterPro" id="IPR038454">
    <property type="entry name" value="DnaA_N_sf"/>
</dbReference>
<dbReference type="InterPro" id="IPR027417">
    <property type="entry name" value="P-loop_NTPase"/>
</dbReference>
<dbReference type="InterPro" id="IPR010921">
    <property type="entry name" value="Trp_repressor/repl_initiator"/>
</dbReference>
<dbReference type="NCBIfam" id="TIGR00362">
    <property type="entry name" value="DnaA"/>
    <property type="match status" value="1"/>
</dbReference>
<dbReference type="PANTHER" id="PTHR30050">
    <property type="entry name" value="CHROMOSOMAL REPLICATION INITIATOR PROTEIN DNAA"/>
    <property type="match status" value="1"/>
</dbReference>
<dbReference type="PANTHER" id="PTHR30050:SF2">
    <property type="entry name" value="CHROMOSOMAL REPLICATION INITIATOR PROTEIN DNAA"/>
    <property type="match status" value="1"/>
</dbReference>
<dbReference type="Pfam" id="PF00308">
    <property type="entry name" value="Bac_DnaA"/>
    <property type="match status" value="1"/>
</dbReference>
<dbReference type="Pfam" id="PF08299">
    <property type="entry name" value="Bac_DnaA_C"/>
    <property type="match status" value="1"/>
</dbReference>
<dbReference type="Pfam" id="PF11638">
    <property type="entry name" value="DnaA_N"/>
    <property type="match status" value="1"/>
</dbReference>
<dbReference type="PRINTS" id="PR00051">
    <property type="entry name" value="DNAA"/>
</dbReference>
<dbReference type="SMART" id="SM00382">
    <property type="entry name" value="AAA"/>
    <property type="match status" value="1"/>
</dbReference>
<dbReference type="SMART" id="SM00760">
    <property type="entry name" value="Bac_DnaA_C"/>
    <property type="match status" value="1"/>
</dbReference>
<dbReference type="SUPFAM" id="SSF52540">
    <property type="entry name" value="P-loop containing nucleoside triphosphate hydrolases"/>
    <property type="match status" value="1"/>
</dbReference>
<dbReference type="SUPFAM" id="SSF48295">
    <property type="entry name" value="TrpR-like"/>
    <property type="match status" value="1"/>
</dbReference>
<dbReference type="PROSITE" id="PS01008">
    <property type="entry name" value="DNAA"/>
    <property type="match status" value="1"/>
</dbReference>
<organism>
    <name type="scientific">Yersinia pestis bv. Antiqua (strain Antiqua)</name>
    <dbReference type="NCBI Taxonomy" id="360102"/>
    <lineage>
        <taxon>Bacteria</taxon>
        <taxon>Pseudomonadati</taxon>
        <taxon>Pseudomonadota</taxon>
        <taxon>Gammaproteobacteria</taxon>
        <taxon>Enterobacterales</taxon>
        <taxon>Yersiniaceae</taxon>
        <taxon>Yersinia</taxon>
    </lineage>
</organism>
<comment type="function">
    <text evidence="1">Plays an essential role in the initiation and regulation of chromosomal replication. ATP-DnaA binds to the origin of replication (oriC) to initiate formation of the DNA replication initiation complex once per cell cycle. Binds the DnaA box (a 9 base pair repeat at the origin) and separates the double-stranded (ds)DNA. Forms a right-handed helical filament on oriC DNA; dsDNA binds to the exterior of the filament while single-stranded (ss)DNA is stabiized in the filament's interior. The ATP-DnaA-oriC complex binds and stabilizes one strand of the AT-rich DNA unwinding element (DUE), permitting loading of DNA polymerase. After initiation quickly degrades to an ADP-DnaA complex that is not apt for DNA replication. Binds acidic phospholipids.</text>
</comment>
<comment type="subunit">
    <text evidence="1">Oligomerizes as a right-handed, spiral filament on DNA at oriC.</text>
</comment>
<comment type="subcellular location">
    <subcellularLocation>
        <location evidence="1">Cytoplasm</location>
    </subcellularLocation>
</comment>
<comment type="domain">
    <text evidence="1">Domain I is involved in oligomerization and binding regulators, domain II is flexibile and of varying length in different bacteria, domain III forms the AAA+ region, while domain IV binds dsDNA.</text>
</comment>
<comment type="similarity">
    <text evidence="1">Belongs to the DnaA family.</text>
</comment>
<protein>
    <recommendedName>
        <fullName evidence="1">Chromosomal replication initiator protein DnaA</fullName>
    </recommendedName>
</protein>